<organism>
    <name type="scientific">Gallus gallus</name>
    <name type="common">Chicken</name>
    <dbReference type="NCBI Taxonomy" id="9031"/>
    <lineage>
        <taxon>Eukaryota</taxon>
        <taxon>Metazoa</taxon>
        <taxon>Chordata</taxon>
        <taxon>Craniata</taxon>
        <taxon>Vertebrata</taxon>
        <taxon>Euteleostomi</taxon>
        <taxon>Archelosauria</taxon>
        <taxon>Archosauria</taxon>
        <taxon>Dinosauria</taxon>
        <taxon>Saurischia</taxon>
        <taxon>Theropoda</taxon>
        <taxon>Coelurosauria</taxon>
        <taxon>Aves</taxon>
        <taxon>Neognathae</taxon>
        <taxon>Galloanserae</taxon>
        <taxon>Galliformes</taxon>
        <taxon>Phasianidae</taxon>
        <taxon>Phasianinae</taxon>
        <taxon>Gallus</taxon>
    </lineage>
</organism>
<dbReference type="EMBL" id="AJ721083">
    <property type="protein sequence ID" value="CAG32742.1"/>
    <property type="molecule type" value="mRNA"/>
</dbReference>
<dbReference type="RefSeq" id="NP_001072966.1">
    <property type="nucleotide sequence ID" value="NM_001079498.2"/>
</dbReference>
<dbReference type="BMRB" id="Q5ZHQ1"/>
<dbReference type="SMR" id="Q5ZHQ1"/>
<dbReference type="FunCoup" id="Q5ZHQ1">
    <property type="interactions" value="1402"/>
</dbReference>
<dbReference type="STRING" id="9031.ENSGALP00000047262"/>
<dbReference type="PaxDb" id="9031-ENSGALP00000033053"/>
<dbReference type="Ensembl" id="ENSGALT00010062275.1">
    <property type="protein sequence ID" value="ENSGALP00010038495.1"/>
    <property type="gene ID" value="ENSGALG00010025522.1"/>
</dbReference>
<dbReference type="GeneID" id="770553"/>
<dbReference type="KEGG" id="gga:770553"/>
<dbReference type="CTD" id="6612"/>
<dbReference type="VEuPathDB" id="HostDB:geneid_770553"/>
<dbReference type="eggNOG" id="KOG1769">
    <property type="taxonomic scope" value="Eukaryota"/>
</dbReference>
<dbReference type="GeneTree" id="ENSGT00950000182895"/>
<dbReference type="HOGENOM" id="CLU_148322_2_1_1"/>
<dbReference type="InParanoid" id="Q5ZHQ1"/>
<dbReference type="OMA" id="SKMMNAY"/>
<dbReference type="OrthoDB" id="442921at2759"/>
<dbReference type="PhylomeDB" id="Q5ZHQ1"/>
<dbReference type="TreeFam" id="TF315116"/>
<dbReference type="Reactome" id="R-GGA-3065679">
    <property type="pathway name" value="SUMO is proteolytically processed"/>
</dbReference>
<dbReference type="Reactome" id="R-GGA-3108214">
    <property type="pathway name" value="SUMOylation of DNA damage response and repair proteins"/>
</dbReference>
<dbReference type="Reactome" id="R-GGA-3232118">
    <property type="pathway name" value="SUMOylation of transcription factors"/>
</dbReference>
<dbReference type="Reactome" id="R-GGA-3899300">
    <property type="pathway name" value="SUMOylation of transcription cofactors"/>
</dbReference>
<dbReference type="Reactome" id="R-GGA-4090294">
    <property type="pathway name" value="SUMOylation of intracellular receptors"/>
</dbReference>
<dbReference type="Reactome" id="R-GGA-4551638">
    <property type="pathway name" value="SUMOylation of chromatin organization proteins"/>
</dbReference>
<dbReference type="Reactome" id="R-GGA-4615885">
    <property type="pathway name" value="SUMOylation of DNA replication proteins"/>
</dbReference>
<dbReference type="Reactome" id="R-GGA-4755510">
    <property type="pathway name" value="SUMOylation of immune response proteins"/>
</dbReference>
<dbReference type="Reactome" id="R-GGA-5696395">
    <property type="pathway name" value="Formation of Incision Complex in GG-NER"/>
</dbReference>
<dbReference type="PRO" id="PR:Q5ZHQ1"/>
<dbReference type="Proteomes" id="UP000000539">
    <property type="component" value="Chromosome 9"/>
</dbReference>
<dbReference type="Bgee" id="ENSGALG00000032783">
    <property type="expression patterns" value="Expressed in ovary and 13 other cell types or tissues"/>
</dbReference>
<dbReference type="GO" id="GO:0005737">
    <property type="term" value="C:cytoplasm"/>
    <property type="evidence" value="ECO:0007669"/>
    <property type="project" value="UniProtKB-SubCell"/>
</dbReference>
<dbReference type="GO" id="GO:0005634">
    <property type="term" value="C:nucleus"/>
    <property type="evidence" value="ECO:0000318"/>
    <property type="project" value="GO_Central"/>
</dbReference>
<dbReference type="GO" id="GO:0016605">
    <property type="term" value="C:PML body"/>
    <property type="evidence" value="ECO:0000250"/>
    <property type="project" value="UniProtKB"/>
</dbReference>
<dbReference type="GO" id="GO:0031386">
    <property type="term" value="F:protein tag activity"/>
    <property type="evidence" value="ECO:0000318"/>
    <property type="project" value="GO_Central"/>
</dbReference>
<dbReference type="GO" id="GO:0044389">
    <property type="term" value="F:ubiquitin-like protein ligase binding"/>
    <property type="evidence" value="ECO:0000318"/>
    <property type="project" value="GO_Central"/>
</dbReference>
<dbReference type="GO" id="GO:0016925">
    <property type="term" value="P:protein sumoylation"/>
    <property type="evidence" value="ECO:0000250"/>
    <property type="project" value="UniProtKB"/>
</dbReference>
<dbReference type="CDD" id="cd16115">
    <property type="entry name" value="Ubl_SUMO2_3_4"/>
    <property type="match status" value="1"/>
</dbReference>
<dbReference type="FunFam" id="3.10.20.90:FF:000022">
    <property type="entry name" value="Small ubiquitin-related modifier"/>
    <property type="match status" value="1"/>
</dbReference>
<dbReference type="Gene3D" id="3.10.20.90">
    <property type="entry name" value="Phosphatidylinositol 3-kinase Catalytic Subunit, Chain A, domain 1"/>
    <property type="match status" value="1"/>
</dbReference>
<dbReference type="InterPro" id="IPR022617">
    <property type="entry name" value="Rad60/SUMO-like_dom"/>
</dbReference>
<dbReference type="InterPro" id="IPR000626">
    <property type="entry name" value="Ubiquitin-like_dom"/>
</dbReference>
<dbReference type="InterPro" id="IPR029071">
    <property type="entry name" value="Ubiquitin-like_domsf"/>
</dbReference>
<dbReference type="PANTHER" id="PTHR10562">
    <property type="entry name" value="SMALL UBIQUITIN-RELATED MODIFIER"/>
    <property type="match status" value="1"/>
</dbReference>
<dbReference type="Pfam" id="PF11976">
    <property type="entry name" value="Rad60-SLD"/>
    <property type="match status" value="1"/>
</dbReference>
<dbReference type="SMART" id="SM00213">
    <property type="entry name" value="UBQ"/>
    <property type="match status" value="1"/>
</dbReference>
<dbReference type="SUPFAM" id="SSF54236">
    <property type="entry name" value="Ubiquitin-like"/>
    <property type="match status" value="1"/>
</dbReference>
<dbReference type="PROSITE" id="PS50053">
    <property type="entry name" value="UBIQUITIN_2"/>
    <property type="match status" value="1"/>
</dbReference>
<reference key="1">
    <citation type="journal article" date="2005" name="Genome Biol.">
        <title>Full-length cDNAs from chicken bursal lymphocytes to facilitate gene function analysis.</title>
        <authorList>
            <person name="Caldwell R.B."/>
            <person name="Kierzek A.M."/>
            <person name="Arakawa H."/>
            <person name="Bezzubov Y."/>
            <person name="Zaim J."/>
            <person name="Fiedler P."/>
            <person name="Kutter S."/>
            <person name="Blagodatski A."/>
            <person name="Kostovska D."/>
            <person name="Koter M."/>
            <person name="Plachy J."/>
            <person name="Carninci P."/>
            <person name="Hayashizaki Y."/>
            <person name="Buerstedde J.-M."/>
        </authorList>
    </citation>
    <scope>NUCLEOTIDE SEQUENCE [LARGE SCALE MRNA]</scope>
    <source>
        <strain>CB</strain>
        <tissue>Bursa of Fabricius</tissue>
    </source>
</reference>
<name>SUMO3_CHICK</name>
<evidence type="ECO:0000250" key="1"/>
<evidence type="ECO:0000255" key="2">
    <source>
        <dbReference type="PROSITE-ProRule" id="PRU00214"/>
    </source>
</evidence>
<evidence type="ECO:0000305" key="3"/>
<evidence type="ECO:0000312" key="4">
    <source>
        <dbReference type="EMBL" id="CAG32742.1"/>
    </source>
</evidence>
<comment type="function">
    <text evidence="1">Ubiquitin-like protein which can be covalently attached to target lysines either as a monomer or as a lysine-linked polymer. Does not seem to be involved in protein degradation and may function as an antagonist of ubiquitin in the degradation process. Plays a role in a number of cellular processes such as nuclear transport, DNA replication and repair, mitosis and signal transduction. Covalent attachment to its substrates requires prior activation by the E1 complex SAE1-SAE2 and linkage to the E2 enzyme UBE2I (By similarity).</text>
</comment>
<comment type="subunit">
    <text evidence="1">Interacts with SAE2 and UBE2I. Covalently attached to a number of proteins (By similarity).</text>
</comment>
<comment type="subcellular location">
    <subcellularLocation>
        <location evidence="1">Cytoplasm</location>
    </subcellularLocation>
    <subcellularLocation>
        <location evidence="1">Nucleus</location>
        <location evidence="1">PML body</location>
    </subcellularLocation>
</comment>
<comment type="PTM">
    <text evidence="1">Polymeric chains can be formed through Lys-11 cross-linking.</text>
</comment>
<comment type="PTM">
    <text evidence="1">Cleavage of precursor form by a sentrin-specific protease is necessary for function.</text>
</comment>
<comment type="similarity">
    <text evidence="3">Belongs to the ubiquitin family. SUMO subfamily.</text>
</comment>
<proteinExistence type="inferred from homology"/>
<feature type="chain" id="PRO_0000267628" description="Small ubiquitin-related modifier 3">
    <location>
        <begin position="1"/>
        <end position="92"/>
    </location>
</feature>
<feature type="propeptide" id="PRO_0000267629" evidence="1">
    <location>
        <begin position="93"/>
        <end position="94"/>
    </location>
</feature>
<feature type="domain" description="Ubiquitin-like" evidence="2">
    <location>
        <begin position="15"/>
        <end position="92"/>
    </location>
</feature>
<feature type="cross-link" description="Glycyl lysine isopeptide (Lys-Gly) (interchain with G-Cter in SUMO)" evidence="1">
    <location>
        <position position="11"/>
    </location>
</feature>
<feature type="cross-link" description="Glycyl lysine isopeptide (Gly-Lys) (interchain with K-? in acceptor proteins)" evidence="2">
    <location>
        <position position="92"/>
    </location>
</feature>
<sequence length="94" mass="10711">MSEEKPKEGVKTENDHINLKVAGQDGSVVQFKIKRHTPLSKLMKAYCERQGLSMRQIRFRFDGQPINEADTPAQLEMEDEDTIDVFQQQTGGLC</sequence>
<accession>Q5ZHQ1</accession>
<keyword id="KW-0963">Cytoplasm</keyword>
<keyword id="KW-1017">Isopeptide bond</keyword>
<keyword id="KW-0539">Nucleus</keyword>
<keyword id="KW-1185">Reference proteome</keyword>
<keyword id="KW-0832">Ubl conjugation</keyword>
<keyword id="KW-0833">Ubl conjugation pathway</keyword>
<gene>
    <name evidence="3" type="primary">SUMO3</name>
    <name evidence="4" type="ORF">RCJMB04_34j10</name>
</gene>
<protein>
    <recommendedName>
        <fullName evidence="3">Small ubiquitin-related modifier 3</fullName>
        <shortName evidence="3">SUMO-3</shortName>
    </recommendedName>
</protein>